<accession>B8G6S2</accession>
<name>RL2_CHLAD</name>
<feature type="chain" id="PRO_1000165731" description="Large ribosomal subunit protein uL2">
    <location>
        <begin position="1"/>
        <end position="274"/>
    </location>
</feature>
<feature type="region of interest" description="Disordered" evidence="2">
    <location>
        <begin position="220"/>
        <end position="259"/>
    </location>
</feature>
<feature type="compositionally biased region" description="Basic and acidic residues" evidence="2">
    <location>
        <begin position="227"/>
        <end position="239"/>
    </location>
</feature>
<feature type="compositionally biased region" description="Basic residues" evidence="2">
    <location>
        <begin position="249"/>
        <end position="259"/>
    </location>
</feature>
<reference key="1">
    <citation type="submission" date="2008-12" db="EMBL/GenBank/DDBJ databases">
        <title>Complete sequence of Chloroflexus aggregans DSM 9485.</title>
        <authorList>
            <consortium name="US DOE Joint Genome Institute"/>
            <person name="Lucas S."/>
            <person name="Copeland A."/>
            <person name="Lapidus A."/>
            <person name="Glavina del Rio T."/>
            <person name="Dalin E."/>
            <person name="Tice H."/>
            <person name="Pitluck S."/>
            <person name="Foster B."/>
            <person name="Larimer F."/>
            <person name="Land M."/>
            <person name="Hauser L."/>
            <person name="Kyrpides N."/>
            <person name="Mikhailova N."/>
            <person name="Bryant D.A."/>
            <person name="Richardson P."/>
        </authorList>
    </citation>
    <scope>NUCLEOTIDE SEQUENCE [LARGE SCALE GENOMIC DNA]</scope>
    <source>
        <strain>MD-66 / DSM 9485</strain>
    </source>
</reference>
<organism>
    <name type="scientific">Chloroflexus aggregans (strain MD-66 / DSM 9485)</name>
    <dbReference type="NCBI Taxonomy" id="326427"/>
    <lineage>
        <taxon>Bacteria</taxon>
        <taxon>Bacillati</taxon>
        <taxon>Chloroflexota</taxon>
        <taxon>Chloroflexia</taxon>
        <taxon>Chloroflexales</taxon>
        <taxon>Chloroflexineae</taxon>
        <taxon>Chloroflexaceae</taxon>
        <taxon>Chloroflexus</taxon>
    </lineage>
</organism>
<evidence type="ECO:0000255" key="1">
    <source>
        <dbReference type="HAMAP-Rule" id="MF_01320"/>
    </source>
</evidence>
<evidence type="ECO:0000256" key="2">
    <source>
        <dbReference type="SAM" id="MobiDB-lite"/>
    </source>
</evidence>
<evidence type="ECO:0000305" key="3"/>
<sequence length="274" mass="30462">MGIRIYKPTSAGRRNMSVSTFEEITKKRPEPGLIEPLRKKAGRNNQGRITVRHRGGGHKRFYRIIDFKRDKFGIPAKVQAIEYDPNRSARIALLAYVDGEKRYIIAPLGLKVGDTVMSGPNAEIRVGNALPLGAIPLGTQIHNIELEIGRGGVLVRAAGTAAQLMAKEGDYATIRMPSGEVRMIHLRCMATIGQVGNVDHQNIRLGKAGRSRWLGRRPRVRGAAMNPRDHPHGGGEGRAPRGMSTPKTKWGKPARGVKTRHNPRFDRFIIRRRK</sequence>
<dbReference type="EMBL" id="CP001337">
    <property type="protein sequence ID" value="ACL25881.1"/>
    <property type="molecule type" value="Genomic_DNA"/>
</dbReference>
<dbReference type="RefSeq" id="WP_015941735.1">
    <property type="nucleotide sequence ID" value="NC_011831.1"/>
</dbReference>
<dbReference type="SMR" id="B8G6S2"/>
<dbReference type="STRING" id="326427.Cagg_3021"/>
<dbReference type="KEGG" id="cag:Cagg_3021"/>
<dbReference type="eggNOG" id="COG0090">
    <property type="taxonomic scope" value="Bacteria"/>
</dbReference>
<dbReference type="HOGENOM" id="CLU_036235_2_1_0"/>
<dbReference type="OrthoDB" id="9778722at2"/>
<dbReference type="Proteomes" id="UP000002508">
    <property type="component" value="Chromosome"/>
</dbReference>
<dbReference type="GO" id="GO:0015934">
    <property type="term" value="C:large ribosomal subunit"/>
    <property type="evidence" value="ECO:0007669"/>
    <property type="project" value="InterPro"/>
</dbReference>
<dbReference type="GO" id="GO:0019843">
    <property type="term" value="F:rRNA binding"/>
    <property type="evidence" value="ECO:0007669"/>
    <property type="project" value="UniProtKB-UniRule"/>
</dbReference>
<dbReference type="GO" id="GO:0003735">
    <property type="term" value="F:structural constituent of ribosome"/>
    <property type="evidence" value="ECO:0007669"/>
    <property type="project" value="InterPro"/>
</dbReference>
<dbReference type="GO" id="GO:0016740">
    <property type="term" value="F:transferase activity"/>
    <property type="evidence" value="ECO:0007669"/>
    <property type="project" value="InterPro"/>
</dbReference>
<dbReference type="GO" id="GO:0002181">
    <property type="term" value="P:cytoplasmic translation"/>
    <property type="evidence" value="ECO:0007669"/>
    <property type="project" value="TreeGrafter"/>
</dbReference>
<dbReference type="FunFam" id="2.30.30.30:FF:000001">
    <property type="entry name" value="50S ribosomal protein L2"/>
    <property type="match status" value="1"/>
</dbReference>
<dbReference type="FunFam" id="2.40.50.140:FF:000003">
    <property type="entry name" value="50S ribosomal protein L2"/>
    <property type="match status" value="1"/>
</dbReference>
<dbReference type="FunFam" id="4.10.950.10:FF:000001">
    <property type="entry name" value="50S ribosomal protein L2"/>
    <property type="match status" value="1"/>
</dbReference>
<dbReference type="Gene3D" id="2.30.30.30">
    <property type="match status" value="1"/>
</dbReference>
<dbReference type="Gene3D" id="2.40.50.140">
    <property type="entry name" value="Nucleic acid-binding proteins"/>
    <property type="match status" value="1"/>
</dbReference>
<dbReference type="Gene3D" id="4.10.950.10">
    <property type="entry name" value="Ribosomal protein L2, domain 3"/>
    <property type="match status" value="1"/>
</dbReference>
<dbReference type="HAMAP" id="MF_01320_B">
    <property type="entry name" value="Ribosomal_uL2_B"/>
    <property type="match status" value="1"/>
</dbReference>
<dbReference type="InterPro" id="IPR012340">
    <property type="entry name" value="NA-bd_OB-fold"/>
</dbReference>
<dbReference type="InterPro" id="IPR014722">
    <property type="entry name" value="Rib_uL2_dom2"/>
</dbReference>
<dbReference type="InterPro" id="IPR002171">
    <property type="entry name" value="Ribosomal_uL2"/>
</dbReference>
<dbReference type="InterPro" id="IPR005880">
    <property type="entry name" value="Ribosomal_uL2_bac/org-type"/>
</dbReference>
<dbReference type="InterPro" id="IPR022669">
    <property type="entry name" value="Ribosomal_uL2_C"/>
</dbReference>
<dbReference type="InterPro" id="IPR022671">
    <property type="entry name" value="Ribosomal_uL2_CS"/>
</dbReference>
<dbReference type="InterPro" id="IPR014726">
    <property type="entry name" value="Ribosomal_uL2_dom3"/>
</dbReference>
<dbReference type="InterPro" id="IPR022666">
    <property type="entry name" value="Ribosomal_uL2_RNA-bd_dom"/>
</dbReference>
<dbReference type="InterPro" id="IPR008991">
    <property type="entry name" value="Translation_prot_SH3-like_sf"/>
</dbReference>
<dbReference type="NCBIfam" id="TIGR01171">
    <property type="entry name" value="rplB_bact"/>
    <property type="match status" value="1"/>
</dbReference>
<dbReference type="PANTHER" id="PTHR13691:SF5">
    <property type="entry name" value="LARGE RIBOSOMAL SUBUNIT PROTEIN UL2M"/>
    <property type="match status" value="1"/>
</dbReference>
<dbReference type="PANTHER" id="PTHR13691">
    <property type="entry name" value="RIBOSOMAL PROTEIN L2"/>
    <property type="match status" value="1"/>
</dbReference>
<dbReference type="Pfam" id="PF00181">
    <property type="entry name" value="Ribosomal_L2"/>
    <property type="match status" value="1"/>
</dbReference>
<dbReference type="Pfam" id="PF03947">
    <property type="entry name" value="Ribosomal_L2_C"/>
    <property type="match status" value="1"/>
</dbReference>
<dbReference type="PIRSF" id="PIRSF002158">
    <property type="entry name" value="Ribosomal_L2"/>
    <property type="match status" value="1"/>
</dbReference>
<dbReference type="SMART" id="SM01383">
    <property type="entry name" value="Ribosomal_L2"/>
    <property type="match status" value="1"/>
</dbReference>
<dbReference type="SMART" id="SM01382">
    <property type="entry name" value="Ribosomal_L2_C"/>
    <property type="match status" value="1"/>
</dbReference>
<dbReference type="SUPFAM" id="SSF50249">
    <property type="entry name" value="Nucleic acid-binding proteins"/>
    <property type="match status" value="1"/>
</dbReference>
<dbReference type="SUPFAM" id="SSF50104">
    <property type="entry name" value="Translation proteins SH3-like domain"/>
    <property type="match status" value="1"/>
</dbReference>
<dbReference type="PROSITE" id="PS00467">
    <property type="entry name" value="RIBOSOMAL_L2"/>
    <property type="match status" value="1"/>
</dbReference>
<proteinExistence type="inferred from homology"/>
<comment type="function">
    <text evidence="1">One of the primary rRNA binding proteins. Required for association of the 30S and 50S subunits to form the 70S ribosome, for tRNA binding and peptide bond formation. It has been suggested to have peptidyltransferase activity; this is somewhat controversial. Makes several contacts with the 16S rRNA in the 70S ribosome.</text>
</comment>
<comment type="subunit">
    <text evidence="1">Part of the 50S ribosomal subunit. Forms a bridge to the 30S subunit in the 70S ribosome.</text>
</comment>
<comment type="similarity">
    <text evidence="1">Belongs to the universal ribosomal protein uL2 family.</text>
</comment>
<protein>
    <recommendedName>
        <fullName evidence="1">Large ribosomal subunit protein uL2</fullName>
    </recommendedName>
    <alternativeName>
        <fullName evidence="3">50S ribosomal protein L2</fullName>
    </alternativeName>
</protein>
<gene>
    <name evidence="1" type="primary">rplB</name>
    <name type="ordered locus">Cagg_3021</name>
</gene>
<keyword id="KW-0687">Ribonucleoprotein</keyword>
<keyword id="KW-0689">Ribosomal protein</keyword>
<keyword id="KW-0694">RNA-binding</keyword>
<keyword id="KW-0699">rRNA-binding</keyword>